<evidence type="ECO:0000250" key="1">
    <source>
        <dbReference type="UniProtKB" id="Q8I0P1"/>
    </source>
</evidence>
<evidence type="ECO:0000255" key="2"/>
<evidence type="ECO:0000255" key="3">
    <source>
        <dbReference type="HAMAP-Rule" id="MF_03021"/>
    </source>
</evidence>
<evidence type="ECO:0000256" key="4">
    <source>
        <dbReference type="SAM" id="MobiDB-lite"/>
    </source>
</evidence>
<organism>
    <name type="scientific">Drosophila persimilis</name>
    <name type="common">Fruit fly</name>
    <dbReference type="NCBI Taxonomy" id="7234"/>
    <lineage>
        <taxon>Eukaryota</taxon>
        <taxon>Metazoa</taxon>
        <taxon>Ecdysozoa</taxon>
        <taxon>Arthropoda</taxon>
        <taxon>Hexapoda</taxon>
        <taxon>Insecta</taxon>
        <taxon>Pterygota</taxon>
        <taxon>Neoptera</taxon>
        <taxon>Endopterygota</taxon>
        <taxon>Diptera</taxon>
        <taxon>Brachycera</taxon>
        <taxon>Muscomorpha</taxon>
        <taxon>Ephydroidea</taxon>
        <taxon>Drosophilidae</taxon>
        <taxon>Drosophila</taxon>
        <taxon>Sophophora</taxon>
    </lineage>
</organism>
<proteinExistence type="inferred from homology"/>
<sequence>MVRTKNQSSSSSASSSSHKSPIKSHGGSGSAAAGTAGHPVSRSSSSHRTSIDDRKSATNVSSSSNRRTTPGSSPDGDGDDDTTTTDDLTPTSTSAPRSAGGPSSVHKQNLYVVSFPIIFLFNVLRSLIYQLFCIFRYLYGASTKVIYRPHRRDCNIEIVVQNNSNNKDQKHQQLTSSQSLNYPLEVTSGEAASEQQVQQPLPQQRYRALQPLEMAGANRSGSGYSPGPGDPLLAKQKHHHRRAFEYISKALKIDEENEGHKELAIELYRKGIKELEDGIAVDCWSGRGDVWDRAQRLHDKMQTNLSMARDRLHFLALREEDFQMHRLSLKEKQKANESREQQQKPQKAREAADKPMLTNLTNDPAKLKTRSSGYGPKNGLTTPRIFATATTPTSSSSLASGRKLTIGTKRPGNLAVAANKSQTLPRNLGSKTSVGAVRQPGKTAATPPAVRRQFSSGRNTPPQRSRTPINNNGASGSGSGASTPVVTVKGVEQKLVQLILDEIVEGGAKVEWTDIAGQEVAKQALQEMVILPSVRPELFTGLRAPAKGLLLFGPPGNGKTLLARAVATECSATFLNISAASLTSKYVGDGEKLVRALFAVARHLQPSIIFIDEVDSLLSERSSGEHEASRRLKTEFLVEFDGLPGNPDGDRIVVLAATNRPQELDEAALRRFTKRVYVSLPDEQTRELLLNRLLQKQGSPLDTDALRRLSKITDGYSGSDLTALAKDAALEPIRELNVEQVKCLDINAMRHITEKDFHNSLKRIRRSVAPQSLSLYEKWSSDYGDITI</sequence>
<keyword id="KW-0067">ATP-binding</keyword>
<keyword id="KW-0131">Cell cycle</keyword>
<keyword id="KW-0132">Cell division</keyword>
<keyword id="KW-0158">Chromosome</keyword>
<keyword id="KW-0963">Cytoplasm</keyword>
<keyword id="KW-0206">Cytoskeleton</keyword>
<keyword id="KW-0217">Developmental protein</keyword>
<keyword id="KW-0221">Differentiation</keyword>
<keyword id="KW-0413">Isomerase</keyword>
<keyword id="KW-0551">Lipid droplet</keyword>
<keyword id="KW-0472">Membrane</keyword>
<keyword id="KW-0493">Microtubule</keyword>
<keyword id="KW-0498">Mitosis</keyword>
<keyword id="KW-0524">Neurogenesis</keyword>
<keyword id="KW-0547">Nucleotide-binding</keyword>
<keyword id="KW-1185">Reference proteome</keyword>
<reference key="1">
    <citation type="journal article" date="2007" name="Nature">
        <title>Evolution of genes and genomes on the Drosophila phylogeny.</title>
        <authorList>
            <consortium name="Drosophila 12 genomes consortium"/>
        </authorList>
    </citation>
    <scope>NUCLEOTIDE SEQUENCE [LARGE SCALE GENOMIC DNA]</scope>
    <source>
        <strain>MSH-3 / Tucson 14011-0111.49</strain>
    </source>
</reference>
<feature type="chain" id="PRO_0000367146" description="Spastin">
    <location>
        <begin position="1"/>
        <end position="788"/>
    </location>
</feature>
<feature type="topological domain" description="Cytoplasmic" evidence="3">
    <location>
        <begin position="1"/>
        <end position="116"/>
    </location>
</feature>
<feature type="intramembrane region" description="Helical" evidence="3">
    <location>
        <begin position="117"/>
        <end position="137"/>
    </location>
</feature>
<feature type="topological domain" description="Cytoplasmic" evidence="3">
    <location>
        <begin position="138"/>
        <end position="788"/>
    </location>
</feature>
<feature type="domain" description="MIT" evidence="2">
    <location>
        <begin position="240"/>
        <end position="315"/>
    </location>
</feature>
<feature type="region of interest" description="Required for localization to punctate cytoplasmic foci" evidence="1">
    <location>
        <begin position="1"/>
        <end position="227"/>
    </location>
</feature>
<feature type="region of interest" description="Disordered" evidence="4">
    <location>
        <begin position="1"/>
        <end position="105"/>
    </location>
</feature>
<feature type="region of interest" description="Sufficient for interaction with microtubules and microtubule severing" evidence="1">
    <location>
        <begin position="227"/>
        <end position="788"/>
    </location>
</feature>
<feature type="region of interest" description="Disordered" evidence="4">
    <location>
        <begin position="331"/>
        <end position="484"/>
    </location>
</feature>
<feature type="region of interest" description="Required for interaction with microtubules" evidence="1">
    <location>
        <begin position="471"/>
        <end position="485"/>
    </location>
</feature>
<feature type="compositionally biased region" description="Low complexity" evidence="4">
    <location>
        <begin position="8"/>
        <end position="48"/>
    </location>
</feature>
<feature type="compositionally biased region" description="Low complexity" evidence="4">
    <location>
        <begin position="57"/>
        <end position="75"/>
    </location>
</feature>
<feature type="compositionally biased region" description="Basic and acidic residues" evidence="4">
    <location>
        <begin position="331"/>
        <end position="353"/>
    </location>
</feature>
<feature type="compositionally biased region" description="Low complexity" evidence="4">
    <location>
        <begin position="387"/>
        <end position="400"/>
    </location>
</feature>
<feature type="compositionally biased region" description="Polar residues" evidence="4">
    <location>
        <begin position="419"/>
        <end position="433"/>
    </location>
</feature>
<feature type="compositionally biased region" description="Polar residues" evidence="4">
    <location>
        <begin position="453"/>
        <end position="469"/>
    </location>
</feature>
<feature type="binding site" evidence="3">
    <location>
        <begin position="553"/>
        <end position="560"/>
    </location>
    <ligand>
        <name>ATP</name>
        <dbReference type="ChEBI" id="CHEBI:30616"/>
    </ligand>
</feature>
<accession>B4G437</accession>
<name>SPAST_DROPE</name>
<dbReference type="EC" id="5.6.1.1" evidence="3"/>
<dbReference type="EMBL" id="CH479179">
    <property type="protein sequence ID" value="EDW24448.1"/>
    <property type="molecule type" value="Genomic_DNA"/>
</dbReference>
<dbReference type="SMR" id="B4G437"/>
<dbReference type="STRING" id="7234.B4G437"/>
<dbReference type="EnsemblMetazoa" id="FBtr0189009">
    <property type="protein sequence ID" value="FBpp0187501"/>
    <property type="gene ID" value="FBgn0160984"/>
</dbReference>
<dbReference type="EnsemblMetazoa" id="XM_002013426.2">
    <property type="protein sequence ID" value="XP_002013462.1"/>
    <property type="gene ID" value="LOC6588451"/>
</dbReference>
<dbReference type="GeneID" id="6588451"/>
<dbReference type="KEGG" id="dpe:6588451"/>
<dbReference type="eggNOG" id="KOG0740">
    <property type="taxonomic scope" value="Eukaryota"/>
</dbReference>
<dbReference type="HOGENOM" id="CLU_000688_21_5_1"/>
<dbReference type="OMA" id="KSREPML"/>
<dbReference type="OrthoDB" id="10251136at2759"/>
<dbReference type="PhylomeDB" id="B4G437"/>
<dbReference type="Proteomes" id="UP000008744">
    <property type="component" value="Unassembled WGS sequence"/>
</dbReference>
<dbReference type="GO" id="GO:0005813">
    <property type="term" value="C:centrosome"/>
    <property type="evidence" value="ECO:0000250"/>
    <property type="project" value="UniProtKB"/>
</dbReference>
<dbReference type="GO" id="GO:0005694">
    <property type="term" value="C:chromosome"/>
    <property type="evidence" value="ECO:0007669"/>
    <property type="project" value="UniProtKB-SubCell"/>
</dbReference>
<dbReference type="GO" id="GO:0005811">
    <property type="term" value="C:lipid droplet"/>
    <property type="evidence" value="ECO:0007669"/>
    <property type="project" value="UniProtKB-SubCell"/>
</dbReference>
<dbReference type="GO" id="GO:0016020">
    <property type="term" value="C:membrane"/>
    <property type="evidence" value="ECO:0007669"/>
    <property type="project" value="UniProtKB-SubCell"/>
</dbReference>
<dbReference type="GO" id="GO:0005874">
    <property type="term" value="C:microtubule"/>
    <property type="evidence" value="ECO:0007669"/>
    <property type="project" value="UniProtKB-UniRule"/>
</dbReference>
<dbReference type="GO" id="GO:0031594">
    <property type="term" value="C:neuromuscular junction"/>
    <property type="evidence" value="ECO:0007669"/>
    <property type="project" value="EnsemblMetazoa"/>
</dbReference>
<dbReference type="GO" id="GO:0005819">
    <property type="term" value="C:spindle"/>
    <property type="evidence" value="ECO:0007669"/>
    <property type="project" value="UniProtKB-UniRule"/>
</dbReference>
<dbReference type="GO" id="GO:0008021">
    <property type="term" value="C:synaptic vesicle"/>
    <property type="evidence" value="ECO:0007669"/>
    <property type="project" value="EnsemblMetazoa"/>
</dbReference>
<dbReference type="GO" id="GO:0043195">
    <property type="term" value="C:terminal bouton"/>
    <property type="evidence" value="ECO:0007669"/>
    <property type="project" value="EnsemblMetazoa"/>
</dbReference>
<dbReference type="GO" id="GO:0005524">
    <property type="term" value="F:ATP binding"/>
    <property type="evidence" value="ECO:0007669"/>
    <property type="project" value="UniProtKB-UniRule"/>
</dbReference>
<dbReference type="GO" id="GO:0016887">
    <property type="term" value="F:ATP hydrolysis activity"/>
    <property type="evidence" value="ECO:0007669"/>
    <property type="project" value="InterPro"/>
</dbReference>
<dbReference type="GO" id="GO:0008017">
    <property type="term" value="F:microtubule binding"/>
    <property type="evidence" value="ECO:0000250"/>
    <property type="project" value="UniProtKB"/>
</dbReference>
<dbReference type="GO" id="GO:0008568">
    <property type="term" value="F:microtubule severing ATPase activity"/>
    <property type="evidence" value="ECO:0000250"/>
    <property type="project" value="UniProtKB"/>
</dbReference>
<dbReference type="GO" id="GO:0008344">
    <property type="term" value="P:adult locomotory behavior"/>
    <property type="evidence" value="ECO:0007669"/>
    <property type="project" value="UniProtKB-UniRule"/>
</dbReference>
<dbReference type="GO" id="GO:0051301">
    <property type="term" value="P:cell division"/>
    <property type="evidence" value="ECO:0007669"/>
    <property type="project" value="UniProtKB-KW"/>
</dbReference>
<dbReference type="GO" id="GO:0035099">
    <property type="term" value="P:hemocyte migration"/>
    <property type="evidence" value="ECO:0007669"/>
    <property type="project" value="EnsemblMetazoa"/>
</dbReference>
<dbReference type="GO" id="GO:0051013">
    <property type="term" value="P:microtubule severing"/>
    <property type="evidence" value="ECO:0000250"/>
    <property type="project" value="UniProtKB"/>
</dbReference>
<dbReference type="GO" id="GO:0007079">
    <property type="term" value="P:mitotic chromosome movement towards spindle pole"/>
    <property type="evidence" value="ECO:0007669"/>
    <property type="project" value="UniProtKB-UniRule"/>
</dbReference>
<dbReference type="GO" id="GO:0000022">
    <property type="term" value="P:mitotic spindle elongation"/>
    <property type="evidence" value="ECO:0007669"/>
    <property type="project" value="UniProtKB-UniRule"/>
</dbReference>
<dbReference type="GO" id="GO:0007026">
    <property type="term" value="P:negative regulation of microtubule depolymerization"/>
    <property type="evidence" value="ECO:0007669"/>
    <property type="project" value="EnsemblMetazoa"/>
</dbReference>
<dbReference type="GO" id="GO:1900074">
    <property type="term" value="P:negative regulation of neuromuscular synaptic transmission"/>
    <property type="evidence" value="ECO:0007669"/>
    <property type="project" value="EnsemblMetazoa"/>
</dbReference>
<dbReference type="GO" id="GO:0045886">
    <property type="term" value="P:negative regulation of synaptic assembly at neuromuscular junction"/>
    <property type="evidence" value="ECO:0007669"/>
    <property type="project" value="EnsemblMetazoa"/>
</dbReference>
<dbReference type="GO" id="GO:0007399">
    <property type="term" value="P:nervous system development"/>
    <property type="evidence" value="ECO:0007669"/>
    <property type="project" value="UniProtKB-KW"/>
</dbReference>
<dbReference type="GO" id="GO:0048691">
    <property type="term" value="P:positive regulation of axon extension involved in regeneration"/>
    <property type="evidence" value="ECO:0007669"/>
    <property type="project" value="EnsemblMetazoa"/>
</dbReference>
<dbReference type="GO" id="GO:0050775">
    <property type="term" value="P:positive regulation of dendrite morphogenesis"/>
    <property type="evidence" value="ECO:0007669"/>
    <property type="project" value="EnsemblMetazoa"/>
</dbReference>
<dbReference type="GO" id="GO:0045834">
    <property type="term" value="P:positive regulation of lipid metabolic process"/>
    <property type="evidence" value="ECO:0007669"/>
    <property type="project" value="EnsemblMetazoa"/>
</dbReference>
<dbReference type="GO" id="GO:0031117">
    <property type="term" value="P:positive regulation of microtubule depolymerization"/>
    <property type="evidence" value="ECO:0007669"/>
    <property type="project" value="UniProtKB-UniRule"/>
</dbReference>
<dbReference type="GO" id="GO:1900075">
    <property type="term" value="P:positive regulation of neuromuscular synaptic transmission"/>
    <property type="evidence" value="ECO:0007669"/>
    <property type="project" value="EnsemblMetazoa"/>
</dbReference>
<dbReference type="GO" id="GO:0045887">
    <property type="term" value="P:positive regulation of synaptic assembly at neuromuscular junction"/>
    <property type="evidence" value="ECO:0007669"/>
    <property type="project" value="EnsemblMetazoa"/>
</dbReference>
<dbReference type="GO" id="GO:0034214">
    <property type="term" value="P:protein hexamerization"/>
    <property type="evidence" value="ECO:0007669"/>
    <property type="project" value="UniProtKB-UniRule"/>
</dbReference>
<dbReference type="GO" id="GO:2000331">
    <property type="term" value="P:regulation of terminal button organization"/>
    <property type="evidence" value="ECO:0007669"/>
    <property type="project" value="EnsemblMetazoa"/>
</dbReference>
<dbReference type="CDD" id="cd02679">
    <property type="entry name" value="MIT_spastin"/>
    <property type="match status" value="1"/>
</dbReference>
<dbReference type="CDD" id="cd19524">
    <property type="entry name" value="RecA-like_spastin"/>
    <property type="match status" value="1"/>
</dbReference>
<dbReference type="FunFam" id="3.40.50.300:FF:000093">
    <property type="entry name" value="Fidgetin-like 1"/>
    <property type="match status" value="1"/>
</dbReference>
<dbReference type="FunFam" id="1.10.8.60:FF:000036">
    <property type="entry name" value="Spastin"/>
    <property type="match status" value="1"/>
</dbReference>
<dbReference type="FunFam" id="1.20.58.80:FF:000006">
    <property type="entry name" value="Spastin"/>
    <property type="match status" value="1"/>
</dbReference>
<dbReference type="Gene3D" id="1.10.8.60">
    <property type="match status" value="1"/>
</dbReference>
<dbReference type="Gene3D" id="3.40.50.300">
    <property type="entry name" value="P-loop containing nucleotide triphosphate hydrolases"/>
    <property type="match status" value="1"/>
</dbReference>
<dbReference type="Gene3D" id="1.20.58.80">
    <property type="entry name" value="Phosphotransferase system, lactose/cellobiose-type IIA subunit"/>
    <property type="match status" value="1"/>
</dbReference>
<dbReference type="HAMAP" id="MF_03021">
    <property type="entry name" value="Spastin"/>
    <property type="match status" value="1"/>
</dbReference>
<dbReference type="InterPro" id="IPR003593">
    <property type="entry name" value="AAA+_ATPase"/>
</dbReference>
<dbReference type="InterPro" id="IPR041569">
    <property type="entry name" value="AAA_lid_3"/>
</dbReference>
<dbReference type="InterPro" id="IPR003959">
    <property type="entry name" value="ATPase_AAA_core"/>
</dbReference>
<dbReference type="InterPro" id="IPR003960">
    <property type="entry name" value="ATPase_AAA_CS"/>
</dbReference>
<dbReference type="InterPro" id="IPR007330">
    <property type="entry name" value="MIT_dom"/>
</dbReference>
<dbReference type="InterPro" id="IPR050304">
    <property type="entry name" value="MT-severing_AAA_ATPase"/>
</dbReference>
<dbReference type="InterPro" id="IPR027417">
    <property type="entry name" value="P-loop_NTPase"/>
</dbReference>
<dbReference type="InterPro" id="IPR017179">
    <property type="entry name" value="Spastin"/>
</dbReference>
<dbReference type="PANTHER" id="PTHR23074">
    <property type="entry name" value="AAA DOMAIN-CONTAINING"/>
    <property type="match status" value="1"/>
</dbReference>
<dbReference type="PANTHER" id="PTHR23074:SF86">
    <property type="entry name" value="SPASTIN"/>
    <property type="match status" value="1"/>
</dbReference>
<dbReference type="Pfam" id="PF00004">
    <property type="entry name" value="AAA"/>
    <property type="match status" value="1"/>
</dbReference>
<dbReference type="Pfam" id="PF17862">
    <property type="entry name" value="AAA_lid_3"/>
    <property type="match status" value="1"/>
</dbReference>
<dbReference type="SMART" id="SM00382">
    <property type="entry name" value="AAA"/>
    <property type="match status" value="1"/>
</dbReference>
<dbReference type="SMART" id="SM00745">
    <property type="entry name" value="MIT"/>
    <property type="match status" value="1"/>
</dbReference>
<dbReference type="SUPFAM" id="SSF52540">
    <property type="entry name" value="P-loop containing nucleoside triphosphate hydrolases"/>
    <property type="match status" value="1"/>
</dbReference>
<dbReference type="PROSITE" id="PS00674">
    <property type="entry name" value="AAA"/>
    <property type="match status" value="1"/>
</dbReference>
<gene>
    <name evidence="3" type="primary">spas</name>
    <name type="ORF">GL23394</name>
</gene>
<protein>
    <recommendedName>
        <fullName evidence="3">Spastin</fullName>
        <ecNumber evidence="3">5.6.1.1</ecNumber>
    </recommendedName>
</protein>
<comment type="function">
    <text evidence="3">ATP-dependent microtubule severing protein. Stimulates microtubule minus-end depolymerization and poleward microtubule flux in the mitotic spindle. Regulates microtubule stability in the neuromuscular junction synapse. Involved in lipid metabolism by regulating the size and distribution of lipid droplets. Involved in axon regeneration by regulating microtubule severing.</text>
</comment>
<comment type="catalytic activity">
    <reaction evidence="3">
        <text>n ATP + n H2O + a microtubule = n ADP + n phosphate + (n+1) alpha/beta tubulin heterodimers.</text>
        <dbReference type="EC" id="5.6.1.1"/>
    </reaction>
</comment>
<comment type="subunit">
    <text evidence="3">Homohexamer. The homohexamer is stabilized by ATP-binding. The homohexamer may adopt a ring conformation through which microtubules pass prior to being severed. Interacts with microtubules. Interacts with atl; may be involved in microtubule dynamics.</text>
</comment>
<comment type="subcellular location">
    <subcellularLocation>
        <location evidence="3">Membrane</location>
        <topology evidence="3">Peripheral membrane protein</topology>
    </subcellularLocation>
    <subcellularLocation>
        <location evidence="3">Cytoplasm</location>
        <location evidence="3">Cytoskeleton</location>
        <location evidence="3">Microtubule organizing center</location>
        <location evidence="3">Centrosome</location>
    </subcellularLocation>
    <subcellularLocation>
        <location evidence="3">Cytoplasm</location>
        <location evidence="3">Cytoskeleton</location>
    </subcellularLocation>
    <subcellularLocation>
        <location evidence="3">Chromosome</location>
    </subcellularLocation>
    <subcellularLocation>
        <location evidence="3">Lipid droplet</location>
    </subcellularLocation>
    <text evidence="3">Forms an intramembrane hairpin-like structure in the membrane. Colocalizes with cellular microtubule arrays. Localizes to chromosomes from prometaphase/metaphase to anaphase, and this requires microtubules. Localizes to discrete punctate cytoplasmic foci which may correspond to secretory vesicles.</text>
</comment>
<comment type="similarity">
    <text evidence="3">Belongs to the AAA ATPase family. Spastin subfamily.</text>
</comment>